<proteinExistence type="inferred from homology"/>
<comment type="function">
    <text evidence="1">The glycine cleavage system catalyzes the degradation of glycine. The P protein binds the alpha-amino group of glycine through its pyridoxal phosphate cofactor; CO(2) is released and the remaining methylamine moiety is then transferred to the lipoamide cofactor of the H protein.</text>
</comment>
<comment type="catalytic activity">
    <reaction evidence="1">
        <text>N(6)-[(R)-lipoyl]-L-lysyl-[glycine-cleavage complex H protein] + glycine + H(+) = N(6)-[(R)-S(8)-aminomethyldihydrolipoyl]-L-lysyl-[glycine-cleavage complex H protein] + CO2</text>
        <dbReference type="Rhea" id="RHEA:24304"/>
        <dbReference type="Rhea" id="RHEA-COMP:10494"/>
        <dbReference type="Rhea" id="RHEA-COMP:10495"/>
        <dbReference type="ChEBI" id="CHEBI:15378"/>
        <dbReference type="ChEBI" id="CHEBI:16526"/>
        <dbReference type="ChEBI" id="CHEBI:57305"/>
        <dbReference type="ChEBI" id="CHEBI:83099"/>
        <dbReference type="ChEBI" id="CHEBI:83143"/>
        <dbReference type="EC" id="1.4.4.2"/>
    </reaction>
</comment>
<comment type="cofactor">
    <cofactor evidence="1">
        <name>pyridoxal 5'-phosphate</name>
        <dbReference type="ChEBI" id="CHEBI:597326"/>
    </cofactor>
</comment>
<comment type="subunit">
    <text evidence="1">The glycine cleavage system is composed of four proteins: P, T, L and H.</text>
</comment>
<comment type="similarity">
    <text evidence="1">Belongs to the GcvP family.</text>
</comment>
<gene>
    <name evidence="1" type="primary">gcvP</name>
    <name type="ordered locus">EFER_2839</name>
</gene>
<accession>B7LPB7</accession>
<keyword id="KW-0560">Oxidoreductase</keyword>
<keyword id="KW-0663">Pyridoxal phosphate</keyword>
<sequence>MTQTLSQLENSGAFIERHIGPDAAQQQEMLNAVGAQSLNALTGQIVPKDIQLATPPQVGAPATEYAALAELKAIASRNKRFTSYIGIGYTAVQLPPVILRNMLENPGWYTAYTPYQPEVSQGRLEALLNFQQVTLDLTGLDMASASLLDEATAAAEAMAMAKRVSKLKNANRFFVASDVHPQTLDVVRTRAETFGFEVIVDDAQKVLDHQDVFGVLLQQVGTTGEIHDYTALISELKSRKIVVSVAADIMALVLLTAPGKQGADIVFGSAQRFGVPMGYGGPHAAFFAAKDEYKRSMPGRIIGVSKDAAGNTALRMAMQTREQHIRREKANSNICTSQVLLANIASLYAVYHGPVGLKRIANRIHRLTDILAAGLQQKGQKLRHAHYFDTLCVEVADKAGVLARAEAAEINLRSDILNAVGITLDETTTRENVMQLFSVLLGDNHGLDIDTLDKDVAHDSRSIQPAMLRDDEILTHPVFNRYHSETEMMRYMHSLERKDLALNQAMIPLGSCTMKLNAAAEMIPITWPEFAELHPFCPPEQAEGYQQMIAQLADWLVKLTGYDAVCMQPNSGAQGEYAGLLAIRHYHESRNEGHRDICLIPASAHGTNPASAHMAGMQVVVVACDKNGNIDLTDLRAKAEQAGDNLSCIMVTYPSTHGVYEETIREVCEIVHQFGGQVYLDGANMNAQVGITSPGFIGADVSHLNLHKTFCIPHGGGGPGMGPIGVKAHLAPFVPGHSVVQIEGMLTRQGAVSAAPFGSASILPISWMYIRMMGAEGLKKASQVAILNANYIASRLQDAFPVLYTGRDGRVAHECILDIRPLKEETGISELDIAKRLIDYGFHAPTMSFPVAGTLMVEPTESESKVELDRFIDAMLAIRAEIDQVKAGVWPLEDNPLVNAPHIQNELVAEWAHPYSREVAVFPAGVADKYWPTVKRLDDVYGDRNLFCSCVPISEYQ</sequence>
<dbReference type="EC" id="1.4.4.2" evidence="1"/>
<dbReference type="EMBL" id="CU928158">
    <property type="protein sequence ID" value="CAQ90333.1"/>
    <property type="molecule type" value="Genomic_DNA"/>
</dbReference>
<dbReference type="RefSeq" id="WP_000194995.1">
    <property type="nucleotide sequence ID" value="NC_011740.1"/>
</dbReference>
<dbReference type="SMR" id="B7LPB7"/>
<dbReference type="GeneID" id="75060541"/>
<dbReference type="KEGG" id="efe:EFER_2839"/>
<dbReference type="HOGENOM" id="CLU_004620_1_1_6"/>
<dbReference type="OrthoDB" id="9801272at2"/>
<dbReference type="Proteomes" id="UP000000745">
    <property type="component" value="Chromosome"/>
</dbReference>
<dbReference type="GO" id="GO:0005829">
    <property type="term" value="C:cytosol"/>
    <property type="evidence" value="ECO:0007669"/>
    <property type="project" value="TreeGrafter"/>
</dbReference>
<dbReference type="GO" id="GO:0005960">
    <property type="term" value="C:glycine cleavage complex"/>
    <property type="evidence" value="ECO:0007669"/>
    <property type="project" value="TreeGrafter"/>
</dbReference>
<dbReference type="GO" id="GO:0016594">
    <property type="term" value="F:glycine binding"/>
    <property type="evidence" value="ECO:0007669"/>
    <property type="project" value="TreeGrafter"/>
</dbReference>
<dbReference type="GO" id="GO:0004375">
    <property type="term" value="F:glycine dehydrogenase (decarboxylating) activity"/>
    <property type="evidence" value="ECO:0007669"/>
    <property type="project" value="UniProtKB-EC"/>
</dbReference>
<dbReference type="GO" id="GO:0030170">
    <property type="term" value="F:pyridoxal phosphate binding"/>
    <property type="evidence" value="ECO:0007669"/>
    <property type="project" value="TreeGrafter"/>
</dbReference>
<dbReference type="GO" id="GO:0019464">
    <property type="term" value="P:glycine decarboxylation via glycine cleavage system"/>
    <property type="evidence" value="ECO:0007669"/>
    <property type="project" value="UniProtKB-UniRule"/>
</dbReference>
<dbReference type="CDD" id="cd00613">
    <property type="entry name" value="GDC-P"/>
    <property type="match status" value="2"/>
</dbReference>
<dbReference type="FunFam" id="3.40.640.10:FF:000005">
    <property type="entry name" value="Glycine dehydrogenase (decarboxylating), mitochondrial"/>
    <property type="match status" value="1"/>
</dbReference>
<dbReference type="FunFam" id="3.90.1150.10:FF:000007">
    <property type="entry name" value="Glycine dehydrogenase (decarboxylating), mitochondrial"/>
    <property type="match status" value="1"/>
</dbReference>
<dbReference type="FunFam" id="3.40.640.10:FF:000007">
    <property type="entry name" value="glycine dehydrogenase (Decarboxylating), mitochondrial"/>
    <property type="match status" value="1"/>
</dbReference>
<dbReference type="Gene3D" id="3.90.1150.10">
    <property type="entry name" value="Aspartate Aminotransferase, domain 1"/>
    <property type="match status" value="1"/>
</dbReference>
<dbReference type="Gene3D" id="3.40.640.10">
    <property type="entry name" value="Type I PLP-dependent aspartate aminotransferase-like (Major domain)"/>
    <property type="match status" value="2"/>
</dbReference>
<dbReference type="HAMAP" id="MF_00711">
    <property type="entry name" value="GcvP"/>
    <property type="match status" value="1"/>
</dbReference>
<dbReference type="InterPro" id="IPR003437">
    <property type="entry name" value="GcvP"/>
</dbReference>
<dbReference type="InterPro" id="IPR049316">
    <property type="entry name" value="GDC-P_C"/>
</dbReference>
<dbReference type="InterPro" id="IPR049315">
    <property type="entry name" value="GDC-P_N"/>
</dbReference>
<dbReference type="InterPro" id="IPR020581">
    <property type="entry name" value="GDC_P"/>
</dbReference>
<dbReference type="InterPro" id="IPR015424">
    <property type="entry name" value="PyrdxlP-dep_Trfase"/>
</dbReference>
<dbReference type="InterPro" id="IPR015421">
    <property type="entry name" value="PyrdxlP-dep_Trfase_major"/>
</dbReference>
<dbReference type="InterPro" id="IPR015422">
    <property type="entry name" value="PyrdxlP-dep_Trfase_small"/>
</dbReference>
<dbReference type="NCBIfam" id="TIGR00461">
    <property type="entry name" value="gcvP"/>
    <property type="match status" value="1"/>
</dbReference>
<dbReference type="NCBIfam" id="NF003346">
    <property type="entry name" value="PRK04366.1"/>
    <property type="match status" value="1"/>
</dbReference>
<dbReference type="PANTHER" id="PTHR11773:SF13">
    <property type="entry name" value="GLYCINE DEHYDROGENASE (DECARBOXYLATING)"/>
    <property type="match status" value="1"/>
</dbReference>
<dbReference type="PANTHER" id="PTHR11773">
    <property type="entry name" value="GLYCINE DEHYDROGENASE, DECARBOXYLATING"/>
    <property type="match status" value="1"/>
</dbReference>
<dbReference type="Pfam" id="PF21478">
    <property type="entry name" value="GcvP2_C"/>
    <property type="match status" value="1"/>
</dbReference>
<dbReference type="Pfam" id="PF02347">
    <property type="entry name" value="GDC-P"/>
    <property type="match status" value="2"/>
</dbReference>
<dbReference type="SUPFAM" id="SSF53383">
    <property type="entry name" value="PLP-dependent transferases"/>
    <property type="match status" value="2"/>
</dbReference>
<organism>
    <name type="scientific">Escherichia fergusonii (strain ATCC 35469 / DSM 13698 / CCUG 18766 / IAM 14443 / JCM 21226 / LMG 7866 / NBRC 102419 / NCTC 12128 / CDC 0568-73)</name>
    <dbReference type="NCBI Taxonomy" id="585054"/>
    <lineage>
        <taxon>Bacteria</taxon>
        <taxon>Pseudomonadati</taxon>
        <taxon>Pseudomonadota</taxon>
        <taxon>Gammaproteobacteria</taxon>
        <taxon>Enterobacterales</taxon>
        <taxon>Enterobacteriaceae</taxon>
        <taxon>Escherichia</taxon>
    </lineage>
</organism>
<reference key="1">
    <citation type="journal article" date="2009" name="PLoS Genet.">
        <title>Organised genome dynamics in the Escherichia coli species results in highly diverse adaptive paths.</title>
        <authorList>
            <person name="Touchon M."/>
            <person name="Hoede C."/>
            <person name="Tenaillon O."/>
            <person name="Barbe V."/>
            <person name="Baeriswyl S."/>
            <person name="Bidet P."/>
            <person name="Bingen E."/>
            <person name="Bonacorsi S."/>
            <person name="Bouchier C."/>
            <person name="Bouvet O."/>
            <person name="Calteau A."/>
            <person name="Chiapello H."/>
            <person name="Clermont O."/>
            <person name="Cruveiller S."/>
            <person name="Danchin A."/>
            <person name="Diard M."/>
            <person name="Dossat C."/>
            <person name="Karoui M.E."/>
            <person name="Frapy E."/>
            <person name="Garry L."/>
            <person name="Ghigo J.M."/>
            <person name="Gilles A.M."/>
            <person name="Johnson J."/>
            <person name="Le Bouguenec C."/>
            <person name="Lescat M."/>
            <person name="Mangenot S."/>
            <person name="Martinez-Jehanne V."/>
            <person name="Matic I."/>
            <person name="Nassif X."/>
            <person name="Oztas S."/>
            <person name="Petit M.A."/>
            <person name="Pichon C."/>
            <person name="Rouy Z."/>
            <person name="Ruf C.S."/>
            <person name="Schneider D."/>
            <person name="Tourret J."/>
            <person name="Vacherie B."/>
            <person name="Vallenet D."/>
            <person name="Medigue C."/>
            <person name="Rocha E.P.C."/>
            <person name="Denamur E."/>
        </authorList>
    </citation>
    <scope>NUCLEOTIDE SEQUENCE [LARGE SCALE GENOMIC DNA]</scope>
    <source>
        <strain>ATCC 35469 / DSM 13698 / BCRC 15582 / CCUG 18766 / IAM 14443 / JCM 21226 / LMG 7866 / NBRC 102419 / NCTC 12128 / CDC 0568-73</strain>
    </source>
</reference>
<name>GCSP_ESCF3</name>
<protein>
    <recommendedName>
        <fullName evidence="1">Glycine dehydrogenase (decarboxylating)</fullName>
        <ecNumber evidence="1">1.4.4.2</ecNumber>
    </recommendedName>
    <alternativeName>
        <fullName evidence="1">Glycine cleavage system P-protein</fullName>
    </alternativeName>
    <alternativeName>
        <fullName evidence="1">Glycine decarboxylase</fullName>
    </alternativeName>
    <alternativeName>
        <fullName evidence="1">Glycine dehydrogenase (aminomethyl-transferring)</fullName>
    </alternativeName>
</protein>
<evidence type="ECO:0000255" key="1">
    <source>
        <dbReference type="HAMAP-Rule" id="MF_00711"/>
    </source>
</evidence>
<feature type="chain" id="PRO_1000132442" description="Glycine dehydrogenase (decarboxylating)">
    <location>
        <begin position="1"/>
        <end position="957"/>
    </location>
</feature>
<feature type="modified residue" description="N6-(pyridoxal phosphate)lysine" evidence="1">
    <location>
        <position position="708"/>
    </location>
</feature>